<comment type="function">
    <text evidence="2">Involved in lignin biosynthesis. Catalyzes the final step specific for the production of lignin monomers. Catalyzes the NADPH-dependent reduction of coniferaldehyde, 5-hydroxyconiferaldehyde, sinapaldehyde, 4-coumaraldehyde and caffeyl aldehyde to their respective alcohols.</text>
</comment>
<comment type="catalytic activity">
    <reaction evidence="2">
        <text>(E)-cinnamyl alcohol + NADP(+) = (E)-cinnamaldehyde + NADPH + H(+)</text>
        <dbReference type="Rhea" id="RHEA:10392"/>
        <dbReference type="ChEBI" id="CHEBI:15378"/>
        <dbReference type="ChEBI" id="CHEBI:16731"/>
        <dbReference type="ChEBI" id="CHEBI:33227"/>
        <dbReference type="ChEBI" id="CHEBI:57783"/>
        <dbReference type="ChEBI" id="CHEBI:58349"/>
        <dbReference type="EC" id="1.1.1.195"/>
    </reaction>
    <physiologicalReaction direction="right-to-left" evidence="2">
        <dbReference type="Rhea" id="RHEA:10394"/>
    </physiologicalReaction>
</comment>
<comment type="cofactor">
    <cofactor evidence="1">
        <name>Zn(2+)</name>
        <dbReference type="ChEBI" id="CHEBI:29105"/>
    </cofactor>
    <text evidence="1">Binds 2 Zn(2+) ions per subunit.</text>
</comment>
<comment type="biophysicochemical properties">
    <kinetics>
        <KM evidence="2">320 uM for 4-coumaraldehyde (at pH 6.25-6.5 and 30 degrees Celsius)</KM>
        <KM evidence="2">3685 uM for caffeyl aldehyde (at pH 6.25 and 30 degrees Celsius)</KM>
        <KM evidence="2">675 uM for coniferaldehyde (at pH 6.25 and 30 degrees Celsius)</KM>
        <KM evidence="2">756 uM for 5-hydroxyconiferaldehyde (at pH 6.25 and 30 degrees Celsius)</KM>
        <KM evidence="2">373 uM for sinapaldehyde (at pH 6.25 and 30 degrees Celsius)</KM>
        <Vmax evidence="2">28.6 pmol/sec/ug enzyme with 4-coumaraldehyde as substrate (at pH 6.25-6.5 and 30 degrees Celsius)</Vmax>
        <Vmax evidence="2">79.0 pmol/sec/ug enzyme with caffeyl aldehyde as substrate (at pH 6.25 and 30 degrees Celsius)</Vmax>
        <Vmax evidence="2">13.0 pmol/sec/ug enzyme with coniferaldehyde as substrate (at pH 6.25 and 30 degrees Celsius)</Vmax>
        <Vmax evidence="2">2.7 pmol/sec/ug enzyme with 5-hydroxyconiferaldehyde as substrate (at pH 6.25 and 30 degrees Celsius)</Vmax>
        <Vmax evidence="2">0.7 pmol/sec/ug enzyme with sinapaldehyde as substrate (at pH 6.25 and 30 degrees Celsius)</Vmax>
    </kinetics>
</comment>
<comment type="pathway">
    <text evidence="2">Aromatic compound metabolism; phenylpropanoid biosynthesis.</text>
</comment>
<comment type="subunit">
    <text evidence="1">Homodimer.</text>
</comment>
<comment type="alternative products">
    <event type="alternative splicing"/>
    <isoform>
        <id>Q02971-1</id>
        <name>1</name>
        <sequence type="displayed"/>
    </isoform>
    <isoform>
        <id>Q02971-2</id>
        <name>2</name>
        <sequence type="described" ref="VSP_037892 VSP_037893"/>
    </isoform>
</comment>
<comment type="tissue specificity">
    <text evidence="3 4">Expressed in the differentiation and elongation zones of primary and lateral roots. Expressed in the hypocotyl, cotyledon and leaf veins, hydathodes and trichomes. In stems, expressed in the vascular cambium region. Expressed in the style, anthers, stamen filaments, vascular tissues of sepals and stigmatic regions in flowers, and abscission, style and stigmatic regions of siliques and seed testa.</text>
</comment>
<comment type="similarity">
    <text evidence="6">Belongs to the zinc-containing alcohol dehydrogenase family.</text>
</comment>
<name>CADH7_ARATH</name>
<reference key="1">
    <citation type="journal article" date="1992" name="EMBO J.">
        <title>Rapid activation of a novel plant defense gene is strictly dependent on the Arabidopsis RPM1 disease resistance locus.</title>
        <authorList>
            <person name="Kiedrowski S."/>
            <person name="Kawalleck P."/>
            <person name="Hahlbrock K."/>
            <person name="Somssich I.E."/>
            <person name="Dangl J.L."/>
        </authorList>
    </citation>
    <scope>NUCLEOTIDE SEQUENCE [MRNA] (ISOFORM 1)</scope>
    <source>
        <strain>cv. Columbia</strain>
    </source>
</reference>
<reference key="2">
    <citation type="journal article" date="2004" name="Proc. Natl. Acad. Sci. U.S.A.">
        <title>Functional reclassification of the putative cinnamyl alcohol dehydrogenase multigene family in Arabidopsis.</title>
        <authorList>
            <person name="Kim S.-J."/>
            <person name="Kim M.-R."/>
            <person name="Bedgar D.L."/>
            <person name="Moinuddin S.G.A."/>
            <person name="Cardenas C.L."/>
            <person name="Davin L.B."/>
            <person name="Kang C."/>
            <person name="Lewis N.G."/>
        </authorList>
    </citation>
    <scope>NUCLEOTIDE SEQUENCE [MRNA] (ISOFORM 1)</scope>
    <scope>FUNCTION</scope>
    <scope>CATALYTIC ACTIVITY</scope>
    <scope>BIOPHYSICOCHEMICAL PROPERTIES</scope>
    <scope>PATHWAY</scope>
    <scope>GENE FAMILY</scope>
    <scope>NOMENCLATURE</scope>
</reference>
<reference key="3">
    <citation type="journal article" date="1999" name="Nature">
        <title>Sequence and analysis of chromosome 4 of the plant Arabidopsis thaliana.</title>
        <authorList>
            <person name="Mayer K.F.X."/>
            <person name="Schueller C."/>
            <person name="Wambutt R."/>
            <person name="Murphy G."/>
            <person name="Volckaert G."/>
            <person name="Pohl T."/>
            <person name="Duesterhoeft A."/>
            <person name="Stiekema W."/>
            <person name="Entian K.-D."/>
            <person name="Terryn N."/>
            <person name="Harris B."/>
            <person name="Ansorge W."/>
            <person name="Brandt P."/>
            <person name="Grivell L.A."/>
            <person name="Rieger M."/>
            <person name="Weichselgartner M."/>
            <person name="de Simone V."/>
            <person name="Obermaier B."/>
            <person name="Mache R."/>
            <person name="Mueller M."/>
            <person name="Kreis M."/>
            <person name="Delseny M."/>
            <person name="Puigdomenech P."/>
            <person name="Watson M."/>
            <person name="Schmidtheini T."/>
            <person name="Reichert B."/>
            <person name="Portetelle D."/>
            <person name="Perez-Alonso M."/>
            <person name="Boutry M."/>
            <person name="Bancroft I."/>
            <person name="Vos P."/>
            <person name="Hoheisel J."/>
            <person name="Zimmermann W."/>
            <person name="Wedler H."/>
            <person name="Ridley P."/>
            <person name="Langham S.-A."/>
            <person name="McCullagh B."/>
            <person name="Bilham L."/>
            <person name="Robben J."/>
            <person name="van der Schueren J."/>
            <person name="Grymonprez B."/>
            <person name="Chuang Y.-J."/>
            <person name="Vandenbussche F."/>
            <person name="Braeken M."/>
            <person name="Weltjens I."/>
            <person name="Voet M."/>
            <person name="Bastiaens I."/>
            <person name="Aert R."/>
            <person name="Defoor E."/>
            <person name="Weitzenegger T."/>
            <person name="Bothe G."/>
            <person name="Ramsperger U."/>
            <person name="Hilbert H."/>
            <person name="Braun M."/>
            <person name="Holzer E."/>
            <person name="Brandt A."/>
            <person name="Peters S."/>
            <person name="van Staveren M."/>
            <person name="Dirkse W."/>
            <person name="Mooijman P."/>
            <person name="Klein Lankhorst R."/>
            <person name="Rose M."/>
            <person name="Hauf J."/>
            <person name="Koetter P."/>
            <person name="Berneiser S."/>
            <person name="Hempel S."/>
            <person name="Feldpausch M."/>
            <person name="Lamberth S."/>
            <person name="Van den Daele H."/>
            <person name="De Keyser A."/>
            <person name="Buysshaert C."/>
            <person name="Gielen J."/>
            <person name="Villarroel R."/>
            <person name="De Clercq R."/>
            <person name="van Montagu M."/>
            <person name="Rogers J."/>
            <person name="Cronin A."/>
            <person name="Quail M.A."/>
            <person name="Bray-Allen S."/>
            <person name="Clark L."/>
            <person name="Doggett J."/>
            <person name="Hall S."/>
            <person name="Kay M."/>
            <person name="Lennard N."/>
            <person name="McLay K."/>
            <person name="Mayes R."/>
            <person name="Pettett A."/>
            <person name="Rajandream M.A."/>
            <person name="Lyne M."/>
            <person name="Benes V."/>
            <person name="Rechmann S."/>
            <person name="Borkova D."/>
            <person name="Bloecker H."/>
            <person name="Scharfe M."/>
            <person name="Grimm M."/>
            <person name="Loehnert T.-H."/>
            <person name="Dose S."/>
            <person name="de Haan M."/>
            <person name="Maarse A.C."/>
            <person name="Schaefer M."/>
            <person name="Mueller-Auer S."/>
            <person name="Gabel C."/>
            <person name="Fuchs M."/>
            <person name="Fartmann B."/>
            <person name="Granderath K."/>
            <person name="Dauner D."/>
            <person name="Herzl A."/>
            <person name="Neumann S."/>
            <person name="Argiriou A."/>
            <person name="Vitale D."/>
            <person name="Liguori R."/>
            <person name="Piravandi E."/>
            <person name="Massenet O."/>
            <person name="Quigley F."/>
            <person name="Clabauld G."/>
            <person name="Muendlein A."/>
            <person name="Felber R."/>
            <person name="Schnabl S."/>
            <person name="Hiller R."/>
            <person name="Schmidt W."/>
            <person name="Lecharny A."/>
            <person name="Aubourg S."/>
            <person name="Chefdor F."/>
            <person name="Cooke R."/>
            <person name="Berger C."/>
            <person name="Monfort A."/>
            <person name="Casacuberta E."/>
            <person name="Gibbons T."/>
            <person name="Weber N."/>
            <person name="Vandenbol M."/>
            <person name="Bargues M."/>
            <person name="Terol J."/>
            <person name="Torres A."/>
            <person name="Perez-Perez A."/>
            <person name="Purnelle B."/>
            <person name="Bent E."/>
            <person name="Johnson S."/>
            <person name="Tacon D."/>
            <person name="Jesse T."/>
            <person name="Heijnen L."/>
            <person name="Schwarz S."/>
            <person name="Scholler P."/>
            <person name="Heber S."/>
            <person name="Francs P."/>
            <person name="Bielke C."/>
            <person name="Frishman D."/>
            <person name="Haase D."/>
            <person name="Lemcke K."/>
            <person name="Mewes H.-W."/>
            <person name="Stocker S."/>
            <person name="Zaccaria P."/>
            <person name="Bevan M."/>
            <person name="Wilson R.K."/>
            <person name="de la Bastide M."/>
            <person name="Habermann K."/>
            <person name="Parnell L."/>
            <person name="Dedhia N."/>
            <person name="Gnoj L."/>
            <person name="Schutz K."/>
            <person name="Huang E."/>
            <person name="Spiegel L."/>
            <person name="Sekhon M."/>
            <person name="Murray J."/>
            <person name="Sheet P."/>
            <person name="Cordes M."/>
            <person name="Abu-Threideh J."/>
            <person name="Stoneking T."/>
            <person name="Kalicki J."/>
            <person name="Graves T."/>
            <person name="Harmon G."/>
            <person name="Edwards J."/>
            <person name="Latreille P."/>
            <person name="Courtney L."/>
            <person name="Cloud J."/>
            <person name="Abbott A."/>
            <person name="Scott K."/>
            <person name="Johnson D."/>
            <person name="Minx P."/>
            <person name="Bentley D."/>
            <person name="Fulton B."/>
            <person name="Miller N."/>
            <person name="Greco T."/>
            <person name="Kemp K."/>
            <person name="Kramer J."/>
            <person name="Fulton L."/>
            <person name="Mardis E."/>
            <person name="Dante M."/>
            <person name="Pepin K."/>
            <person name="Hillier L.W."/>
            <person name="Nelson J."/>
            <person name="Spieth J."/>
            <person name="Ryan E."/>
            <person name="Andrews S."/>
            <person name="Geisel C."/>
            <person name="Layman D."/>
            <person name="Du H."/>
            <person name="Ali J."/>
            <person name="Berghoff A."/>
            <person name="Jones K."/>
            <person name="Drone K."/>
            <person name="Cotton M."/>
            <person name="Joshu C."/>
            <person name="Antonoiu B."/>
            <person name="Zidanic M."/>
            <person name="Strong C."/>
            <person name="Sun H."/>
            <person name="Lamar B."/>
            <person name="Yordan C."/>
            <person name="Ma P."/>
            <person name="Zhong J."/>
            <person name="Preston R."/>
            <person name="Vil D."/>
            <person name="Shekher M."/>
            <person name="Matero A."/>
            <person name="Shah R."/>
            <person name="Swaby I.K."/>
            <person name="O'Shaughnessy A."/>
            <person name="Rodriguez M."/>
            <person name="Hoffman J."/>
            <person name="Till S."/>
            <person name="Granat S."/>
            <person name="Shohdy N."/>
            <person name="Hasegawa A."/>
            <person name="Hameed A."/>
            <person name="Lodhi M."/>
            <person name="Johnson A."/>
            <person name="Chen E."/>
            <person name="Marra M.A."/>
            <person name="Martienssen R."/>
            <person name="McCombie W.R."/>
        </authorList>
    </citation>
    <scope>NUCLEOTIDE SEQUENCE [LARGE SCALE GENOMIC DNA]</scope>
    <source>
        <strain>cv. Columbia</strain>
    </source>
</reference>
<reference key="4">
    <citation type="journal article" date="2017" name="Plant J.">
        <title>Araport11: a complete reannotation of the Arabidopsis thaliana reference genome.</title>
        <authorList>
            <person name="Cheng C.Y."/>
            <person name="Krishnakumar V."/>
            <person name="Chan A.P."/>
            <person name="Thibaud-Nissen F."/>
            <person name="Schobel S."/>
            <person name="Town C.D."/>
        </authorList>
    </citation>
    <scope>GENOME REANNOTATION</scope>
    <source>
        <strain>cv. Columbia</strain>
    </source>
</reference>
<reference key="5">
    <citation type="journal article" date="2003" name="Science">
        <title>Empirical analysis of transcriptional activity in the Arabidopsis genome.</title>
        <authorList>
            <person name="Yamada K."/>
            <person name="Lim J."/>
            <person name="Dale J.M."/>
            <person name="Chen H."/>
            <person name="Shinn P."/>
            <person name="Palm C.J."/>
            <person name="Southwick A.M."/>
            <person name="Wu H.C."/>
            <person name="Kim C.J."/>
            <person name="Nguyen M."/>
            <person name="Pham P.K."/>
            <person name="Cheuk R.F."/>
            <person name="Karlin-Newmann G."/>
            <person name="Liu S.X."/>
            <person name="Lam B."/>
            <person name="Sakano H."/>
            <person name="Wu T."/>
            <person name="Yu G."/>
            <person name="Miranda M."/>
            <person name="Quach H.L."/>
            <person name="Tripp M."/>
            <person name="Chang C.H."/>
            <person name="Lee J.M."/>
            <person name="Toriumi M.J."/>
            <person name="Chan M.M."/>
            <person name="Tang C.C."/>
            <person name="Onodera C.S."/>
            <person name="Deng J.M."/>
            <person name="Akiyama K."/>
            <person name="Ansari Y."/>
            <person name="Arakawa T."/>
            <person name="Banh J."/>
            <person name="Banno F."/>
            <person name="Bowser L."/>
            <person name="Brooks S.Y."/>
            <person name="Carninci P."/>
            <person name="Chao Q."/>
            <person name="Choy N."/>
            <person name="Enju A."/>
            <person name="Goldsmith A.D."/>
            <person name="Gurjal M."/>
            <person name="Hansen N.F."/>
            <person name="Hayashizaki Y."/>
            <person name="Johnson-Hopson C."/>
            <person name="Hsuan V.W."/>
            <person name="Iida K."/>
            <person name="Karnes M."/>
            <person name="Khan S."/>
            <person name="Koesema E."/>
            <person name="Ishida J."/>
            <person name="Jiang P.X."/>
            <person name="Jones T."/>
            <person name="Kawai J."/>
            <person name="Kamiya A."/>
            <person name="Meyers C."/>
            <person name="Nakajima M."/>
            <person name="Narusaka M."/>
            <person name="Seki M."/>
            <person name="Sakurai T."/>
            <person name="Satou M."/>
            <person name="Tamse R."/>
            <person name="Vaysberg M."/>
            <person name="Wallender E.K."/>
            <person name="Wong C."/>
            <person name="Yamamura Y."/>
            <person name="Yuan S."/>
            <person name="Shinozaki K."/>
            <person name="Davis R.W."/>
            <person name="Theologis A."/>
            <person name="Ecker J.R."/>
        </authorList>
    </citation>
    <scope>NUCLEOTIDE SEQUENCE [LARGE SCALE MRNA] (ISOFORM 1)</scope>
    <source>
        <strain>cv. Columbia</strain>
    </source>
</reference>
<reference key="6">
    <citation type="journal article" date="2009" name="DNA Res.">
        <title>Analysis of multiple occurrences of alternative splicing events in Arabidopsis thaliana using novel sequenced full-length cDNAs.</title>
        <authorList>
            <person name="Iida K."/>
            <person name="Fukami-Kobayashi K."/>
            <person name="Toyoda A."/>
            <person name="Sakaki Y."/>
            <person name="Kobayashi M."/>
            <person name="Seki M."/>
            <person name="Shinozaki K."/>
        </authorList>
    </citation>
    <scope>NUCLEOTIDE SEQUENCE [LARGE SCALE MRNA] (ISOFORM 1)</scope>
    <source>
        <strain>cv. Columbia</strain>
    </source>
</reference>
<reference key="7">
    <citation type="journal article" date="2000" name="Plant Mol. Biol.">
        <title>Organization and structural evolution of four multigene families in Arabidopsis thaliana: AtLCAD, AtLGT, AtMYST and AtHD-GL2.</title>
        <authorList>
            <person name="Tavares R."/>
            <person name="Aubourg S."/>
            <person name="Lecharny A."/>
            <person name="Kreis M."/>
        </authorList>
    </citation>
    <scope>NUCLEOTIDE SEQUENCE [GENOMIC DNA] OF 1-161</scope>
    <source>
        <strain>cv. Columbia</strain>
    </source>
</reference>
<reference key="8">
    <citation type="journal article" date="2006" name="Planta">
        <title>Evidence for a role of AtCAD 1 in lignification of elongating stems of Arabidopsis thaliana.</title>
        <authorList>
            <person name="Eudes A."/>
            <person name="Pollet B."/>
            <person name="Sibout R."/>
            <person name="Do C.-T."/>
            <person name="Seguin A."/>
            <person name="Lapierre C."/>
            <person name="Jouanin L."/>
        </authorList>
    </citation>
    <scope>TISSUE SPECIFICITY</scope>
</reference>
<reference key="9">
    <citation type="journal article" date="2007" name="Phytochemistry">
        <title>Expression of cinnamyl alcohol dehydrogenases and their putative homologues during Arabidopsis thaliana growth and development: lessons for database annotations?</title>
        <authorList>
            <person name="Kim S.-J."/>
            <person name="Kim K.-W."/>
            <person name="Cho M.-H."/>
            <person name="Franceschi V.R."/>
            <person name="Davin L.B."/>
            <person name="Lewis N.G."/>
        </authorList>
    </citation>
    <scope>TISSUE SPECIFICITY</scope>
</reference>
<organism>
    <name type="scientific">Arabidopsis thaliana</name>
    <name type="common">Mouse-ear cress</name>
    <dbReference type="NCBI Taxonomy" id="3702"/>
    <lineage>
        <taxon>Eukaryota</taxon>
        <taxon>Viridiplantae</taxon>
        <taxon>Streptophyta</taxon>
        <taxon>Embryophyta</taxon>
        <taxon>Tracheophyta</taxon>
        <taxon>Spermatophyta</taxon>
        <taxon>Magnoliopsida</taxon>
        <taxon>eudicotyledons</taxon>
        <taxon>Gunneridae</taxon>
        <taxon>Pentapetalae</taxon>
        <taxon>rosids</taxon>
        <taxon>malvids</taxon>
        <taxon>Brassicales</taxon>
        <taxon>Brassicaceae</taxon>
        <taxon>Camelineae</taxon>
        <taxon>Arabidopsis</taxon>
    </lineage>
</organism>
<feature type="chain" id="PRO_0000160808" description="Cinnamyl alcohol dehydrogenase 7">
    <location>
        <begin position="1"/>
        <end position="357"/>
    </location>
</feature>
<feature type="binding site" evidence="1">
    <location>
        <position position="46"/>
    </location>
    <ligand>
        <name>Zn(2+)</name>
        <dbReference type="ChEBI" id="CHEBI:29105"/>
        <label>1</label>
        <note>catalytic</note>
    </ligand>
</feature>
<feature type="binding site" evidence="1">
    <location>
        <position position="48"/>
    </location>
    <ligand>
        <name>NADP(+)</name>
        <dbReference type="ChEBI" id="CHEBI:58349"/>
    </ligand>
</feature>
<feature type="binding site" evidence="1">
    <location>
        <position position="68"/>
    </location>
    <ligand>
        <name>Zn(2+)</name>
        <dbReference type="ChEBI" id="CHEBI:29105"/>
        <label>1</label>
        <note>catalytic</note>
    </ligand>
</feature>
<feature type="binding site" evidence="1">
    <location>
        <position position="69"/>
    </location>
    <ligand>
        <name>Zn(2+)</name>
        <dbReference type="ChEBI" id="CHEBI:29105"/>
        <label>1</label>
        <note>catalytic</note>
    </ligand>
</feature>
<feature type="binding site" evidence="1">
    <location>
        <position position="99"/>
    </location>
    <ligand>
        <name>Zn(2+)</name>
        <dbReference type="ChEBI" id="CHEBI:29105"/>
        <label>2</label>
    </ligand>
</feature>
<feature type="binding site" evidence="1">
    <location>
        <position position="102"/>
    </location>
    <ligand>
        <name>Zn(2+)</name>
        <dbReference type="ChEBI" id="CHEBI:29105"/>
        <label>2</label>
    </ligand>
</feature>
<feature type="binding site" evidence="1">
    <location>
        <position position="105"/>
    </location>
    <ligand>
        <name>Zn(2+)</name>
        <dbReference type="ChEBI" id="CHEBI:29105"/>
        <label>2</label>
    </ligand>
</feature>
<feature type="binding site" evidence="1">
    <location>
        <position position="113"/>
    </location>
    <ligand>
        <name>Zn(2+)</name>
        <dbReference type="ChEBI" id="CHEBI:29105"/>
        <label>2</label>
    </ligand>
</feature>
<feature type="binding site" evidence="1">
    <location>
        <position position="162"/>
    </location>
    <ligand>
        <name>Zn(2+)</name>
        <dbReference type="ChEBI" id="CHEBI:29105"/>
        <label>1</label>
        <note>catalytic</note>
    </ligand>
</feature>
<feature type="binding site" evidence="1">
    <location>
        <position position="166"/>
    </location>
    <ligand>
        <name>NADP(+)</name>
        <dbReference type="ChEBI" id="CHEBI:58349"/>
    </ligand>
</feature>
<feature type="binding site" evidence="1">
    <location>
        <begin position="187"/>
        <end position="192"/>
    </location>
    <ligand>
        <name>NADP(+)</name>
        <dbReference type="ChEBI" id="CHEBI:58349"/>
    </ligand>
</feature>
<feature type="binding site" evidence="1">
    <location>
        <begin position="210"/>
        <end position="215"/>
    </location>
    <ligand>
        <name>NADP(+)</name>
        <dbReference type="ChEBI" id="CHEBI:58349"/>
    </ligand>
</feature>
<feature type="binding site" evidence="1">
    <location>
        <position position="250"/>
    </location>
    <ligand>
        <name>NADP(+)</name>
        <dbReference type="ChEBI" id="CHEBI:58349"/>
    </ligand>
</feature>
<feature type="binding site" evidence="1">
    <location>
        <position position="274"/>
    </location>
    <ligand>
        <name>NADP(+)</name>
        <dbReference type="ChEBI" id="CHEBI:58349"/>
    </ligand>
</feature>
<feature type="binding site" evidence="1">
    <location>
        <begin position="297"/>
        <end position="299"/>
    </location>
    <ligand>
        <name>NADP(+)</name>
        <dbReference type="ChEBI" id="CHEBI:58349"/>
    </ligand>
</feature>
<feature type="splice variant" id="VSP_037892" description="In isoform 2." evidence="6">
    <original>RKMVVGSM</original>
    <variation>MNLFVSHL</variation>
    <location>
        <begin position="291"/>
        <end position="298"/>
    </location>
</feature>
<feature type="splice variant" id="VSP_037893" description="In isoform 2." evidence="6">
    <location>
        <begin position="299"/>
        <end position="357"/>
    </location>
</feature>
<feature type="sequence conflict" description="In Ref. 1; CAA48027." evidence="6" ref="1">
    <original>E</original>
    <variation>Q</variation>
    <location>
        <position position="6"/>
    </location>
</feature>
<feature type="sequence conflict" description="In Ref. 1; CAA48027." evidence="6" ref="1">
    <original>E</original>
    <variation>N</variation>
    <location>
        <position position="17"/>
    </location>
</feature>
<feature type="sequence conflict" description="In Ref. 1; CAA48027." evidence="6" ref="1">
    <original>I</original>
    <variation>V</variation>
    <location>
        <position position="20"/>
    </location>
</feature>
<sequence>MGKVLEKEAFGLAAKDESGILSPFSFSRRATGEKDVRFKVLFCGICHTDLSMAKNEWGLTTYPLVPGHEIVGVVTEVGAKVKKFNAGDKVGVGYMAGSCRSCDSCNDGDENYCPKMILTSGAKNFDDTMTHGGYSDHMVCAEDFIIRIPDNLPLDGAAPLLCAGVTVYSPMKYHGLDKPGMHIGVVGLGGLGHVAVKFAKAMGTKVTVISTSERKRDEAVTRLGADAFLVSRDPKQMKDAMGTMDGIIDTVSATHPLLPLLGLLKNKGKLVMVGAPAEPLELPVFPLIFGRKMVVGSMVGGIKETQEMVDLAGKHNITADIELISADYVNTAMERLAKADVKYRFVIDVANTMKPTP</sequence>
<proteinExistence type="evidence at protein level"/>
<accession>Q02971</accession>
<accession>B9DG76</accession>
<accession>O65622</accession>
<accession>Q53ZN3</accession>
<accession>Q9SZJ9</accession>
<keyword id="KW-0025">Alternative splicing</keyword>
<keyword id="KW-0438">Lignin biosynthesis</keyword>
<keyword id="KW-0479">Metal-binding</keyword>
<keyword id="KW-0521">NADP</keyword>
<keyword id="KW-0560">Oxidoreductase</keyword>
<keyword id="KW-1185">Reference proteome</keyword>
<keyword id="KW-0862">Zinc</keyword>
<gene>
    <name type="primary">CAD7</name>
    <name type="synonym">CAD4</name>
    <name type="synonym">CADB1</name>
    <name type="synonym">ELI3-1</name>
    <name type="synonym">LCAD-B</name>
    <name type="ordered locus">At4g37980</name>
    <name type="ORF">F20D10.100</name>
</gene>
<protein>
    <recommendedName>
        <fullName evidence="5">Cinnamyl alcohol dehydrogenase 7</fullName>
        <shortName evidence="5">AtCAD7</shortName>
        <ecNumber evidence="2">1.1.1.195</ecNumber>
    </recommendedName>
    <alternativeName>
        <fullName>Cinnamyl alcohol dehydrogenase-like protein B</fullName>
    </alternativeName>
</protein>
<dbReference type="EC" id="1.1.1.195" evidence="2"/>
<dbReference type="EMBL" id="X67816">
    <property type="protein sequence ID" value="CAA48027.1"/>
    <property type="molecule type" value="mRNA"/>
</dbReference>
<dbReference type="EMBL" id="AY302079">
    <property type="protein sequence ID" value="AAP59432.1"/>
    <property type="molecule type" value="mRNA"/>
</dbReference>
<dbReference type="EMBL" id="AL035538">
    <property type="protein sequence ID" value="CAB37538.1"/>
    <property type="molecule type" value="Genomic_DNA"/>
</dbReference>
<dbReference type="EMBL" id="AL161592">
    <property type="protein sequence ID" value="CAB80463.1"/>
    <property type="molecule type" value="Genomic_DNA"/>
</dbReference>
<dbReference type="EMBL" id="CP002687">
    <property type="protein sequence ID" value="AEE86859.1"/>
    <property type="molecule type" value="Genomic_DNA"/>
</dbReference>
<dbReference type="EMBL" id="CP002687">
    <property type="protein sequence ID" value="AEE86860.1"/>
    <property type="molecule type" value="Genomic_DNA"/>
</dbReference>
<dbReference type="EMBL" id="AF360225">
    <property type="protein sequence ID" value="AAK25935.1"/>
    <property type="molecule type" value="mRNA"/>
</dbReference>
<dbReference type="EMBL" id="AY040066">
    <property type="protein sequence ID" value="AAK64124.1"/>
    <property type="molecule type" value="mRNA"/>
</dbReference>
<dbReference type="EMBL" id="AY050407">
    <property type="protein sequence ID" value="AAK91423.1"/>
    <property type="molecule type" value="mRNA"/>
</dbReference>
<dbReference type="EMBL" id="AY050931">
    <property type="protein sequence ID" value="AAK93608.1"/>
    <property type="molecule type" value="mRNA"/>
</dbReference>
<dbReference type="EMBL" id="AY056385">
    <property type="protein sequence ID" value="AAL08241.1"/>
    <property type="molecule type" value="mRNA"/>
</dbReference>
<dbReference type="EMBL" id="BT002729">
    <property type="protein sequence ID" value="AAO11645.1"/>
    <property type="molecule type" value="mRNA"/>
</dbReference>
<dbReference type="EMBL" id="AK317050">
    <property type="protein sequence ID" value="BAH19743.1"/>
    <property type="molecule type" value="mRNA"/>
</dbReference>
<dbReference type="EMBL" id="Y16848">
    <property type="protein sequence ID" value="CAA76419.1"/>
    <property type="molecule type" value="Genomic_DNA"/>
</dbReference>
<dbReference type="PIR" id="T05625">
    <property type="entry name" value="T05625"/>
</dbReference>
<dbReference type="RefSeq" id="NP_001031805.1">
    <molecule id="Q02971-2"/>
    <property type="nucleotide sequence ID" value="NM_001036728.2"/>
</dbReference>
<dbReference type="RefSeq" id="NP_195511.1">
    <molecule id="Q02971-1"/>
    <property type="nucleotide sequence ID" value="NM_119959.4"/>
</dbReference>
<dbReference type="SMR" id="Q02971"/>
<dbReference type="BioGRID" id="15234">
    <property type="interactions" value="1"/>
</dbReference>
<dbReference type="FunCoup" id="Q02971">
    <property type="interactions" value="321"/>
</dbReference>
<dbReference type="STRING" id="3702.Q02971"/>
<dbReference type="iPTMnet" id="Q02971"/>
<dbReference type="MetOSite" id="Q02971"/>
<dbReference type="PaxDb" id="3702-AT4G37980.1"/>
<dbReference type="ProteomicsDB" id="223862">
    <molecule id="Q02971-1"/>
</dbReference>
<dbReference type="EnsemblPlants" id="AT4G37980.1">
    <molecule id="Q02971-1"/>
    <property type="protein sequence ID" value="AT4G37980.1"/>
    <property type="gene ID" value="AT4G37980"/>
</dbReference>
<dbReference type="EnsemblPlants" id="AT4G37980.2">
    <molecule id="Q02971-2"/>
    <property type="protein sequence ID" value="AT4G37980.2"/>
    <property type="gene ID" value="AT4G37980"/>
</dbReference>
<dbReference type="GeneID" id="829954"/>
<dbReference type="Gramene" id="AT4G37980.1">
    <molecule id="Q02971-1"/>
    <property type="protein sequence ID" value="AT4G37980.1"/>
    <property type="gene ID" value="AT4G37980"/>
</dbReference>
<dbReference type="Gramene" id="AT4G37980.2">
    <molecule id="Q02971-2"/>
    <property type="protein sequence ID" value="AT4G37980.2"/>
    <property type="gene ID" value="AT4G37980"/>
</dbReference>
<dbReference type="KEGG" id="ath:AT4G37980"/>
<dbReference type="Araport" id="AT4G37980"/>
<dbReference type="TAIR" id="AT4G37980">
    <property type="gene designation" value="ELI3-1"/>
</dbReference>
<dbReference type="eggNOG" id="KOG0023">
    <property type="taxonomic scope" value="Eukaryota"/>
</dbReference>
<dbReference type="InParanoid" id="Q02971"/>
<dbReference type="OMA" id="GPAWFVF"/>
<dbReference type="OrthoDB" id="1879366at2759"/>
<dbReference type="PhylomeDB" id="Q02971"/>
<dbReference type="BioCyc" id="ARA:AT4G37980-MONOMER"/>
<dbReference type="BioCyc" id="MetaCyc:MONOMER-17195"/>
<dbReference type="BRENDA" id="1.1.1.195">
    <property type="organism ID" value="399"/>
</dbReference>
<dbReference type="SABIO-RK" id="Q02971"/>
<dbReference type="UniPathway" id="UPA00711"/>
<dbReference type="CD-CODE" id="4299E36E">
    <property type="entry name" value="Nucleolus"/>
</dbReference>
<dbReference type="PRO" id="PR:Q02971"/>
<dbReference type="Proteomes" id="UP000006548">
    <property type="component" value="Chromosome 4"/>
</dbReference>
<dbReference type="ExpressionAtlas" id="Q02971">
    <property type="expression patterns" value="baseline and differential"/>
</dbReference>
<dbReference type="GO" id="GO:0005886">
    <property type="term" value="C:plasma membrane"/>
    <property type="evidence" value="ECO:0007005"/>
    <property type="project" value="TAIR"/>
</dbReference>
<dbReference type="GO" id="GO:0045551">
    <property type="term" value="F:cinnamyl-alcohol dehydrogenase activity"/>
    <property type="evidence" value="ECO:0000314"/>
    <property type="project" value="UniProtKB"/>
</dbReference>
<dbReference type="GO" id="GO:0008270">
    <property type="term" value="F:zinc ion binding"/>
    <property type="evidence" value="ECO:0007669"/>
    <property type="project" value="InterPro"/>
</dbReference>
<dbReference type="GO" id="GO:0010597">
    <property type="term" value="P:green leaf volatile biosynthetic process"/>
    <property type="evidence" value="ECO:0000316"/>
    <property type="project" value="TAIR"/>
</dbReference>
<dbReference type="GO" id="GO:0009809">
    <property type="term" value="P:lignin biosynthetic process"/>
    <property type="evidence" value="ECO:0000270"/>
    <property type="project" value="UniProtKB"/>
</dbReference>
<dbReference type="GO" id="GO:0009617">
    <property type="term" value="P:response to bacterium"/>
    <property type="evidence" value="ECO:0000270"/>
    <property type="project" value="TAIR"/>
</dbReference>
<dbReference type="CDD" id="cd05283">
    <property type="entry name" value="CAD1"/>
    <property type="match status" value="1"/>
</dbReference>
<dbReference type="FunFam" id="3.40.50.720:FF:000022">
    <property type="entry name" value="Cinnamyl alcohol dehydrogenase"/>
    <property type="match status" value="1"/>
</dbReference>
<dbReference type="FunFam" id="3.90.180.10:FF:000004">
    <property type="entry name" value="probable cinnamyl alcohol dehydrogenase"/>
    <property type="match status" value="1"/>
</dbReference>
<dbReference type="Gene3D" id="3.90.180.10">
    <property type="entry name" value="Medium-chain alcohol dehydrogenases, catalytic domain"/>
    <property type="match status" value="1"/>
</dbReference>
<dbReference type="Gene3D" id="3.40.50.720">
    <property type="entry name" value="NAD(P)-binding Rossmann-like Domain"/>
    <property type="match status" value="1"/>
</dbReference>
<dbReference type="InterPro" id="IPR013149">
    <property type="entry name" value="ADH-like_C"/>
</dbReference>
<dbReference type="InterPro" id="IPR013154">
    <property type="entry name" value="ADH-like_N"/>
</dbReference>
<dbReference type="InterPro" id="IPR002328">
    <property type="entry name" value="ADH_Zn_CS"/>
</dbReference>
<dbReference type="InterPro" id="IPR047109">
    <property type="entry name" value="CAD-like"/>
</dbReference>
<dbReference type="InterPro" id="IPR011032">
    <property type="entry name" value="GroES-like_sf"/>
</dbReference>
<dbReference type="InterPro" id="IPR036291">
    <property type="entry name" value="NAD(P)-bd_dom_sf"/>
</dbReference>
<dbReference type="InterPro" id="IPR020843">
    <property type="entry name" value="PKS_ER"/>
</dbReference>
<dbReference type="PANTHER" id="PTHR42683">
    <property type="entry name" value="ALDEHYDE REDUCTASE"/>
    <property type="match status" value="1"/>
</dbReference>
<dbReference type="Pfam" id="PF08240">
    <property type="entry name" value="ADH_N"/>
    <property type="match status" value="1"/>
</dbReference>
<dbReference type="Pfam" id="PF00107">
    <property type="entry name" value="ADH_zinc_N"/>
    <property type="match status" value="1"/>
</dbReference>
<dbReference type="SMART" id="SM00829">
    <property type="entry name" value="PKS_ER"/>
    <property type="match status" value="1"/>
</dbReference>
<dbReference type="SUPFAM" id="SSF50129">
    <property type="entry name" value="GroES-like"/>
    <property type="match status" value="1"/>
</dbReference>
<dbReference type="SUPFAM" id="SSF51735">
    <property type="entry name" value="NAD(P)-binding Rossmann-fold domains"/>
    <property type="match status" value="1"/>
</dbReference>
<dbReference type="PROSITE" id="PS00059">
    <property type="entry name" value="ADH_ZINC"/>
    <property type="match status" value="1"/>
</dbReference>
<evidence type="ECO:0000250" key="1"/>
<evidence type="ECO:0000269" key="2">
    <source>
    </source>
</evidence>
<evidence type="ECO:0000269" key="3">
    <source>
    </source>
</evidence>
<evidence type="ECO:0000269" key="4">
    <source>
    </source>
</evidence>
<evidence type="ECO:0000303" key="5">
    <source>
    </source>
</evidence>
<evidence type="ECO:0000305" key="6"/>